<proteinExistence type="inferred from homology"/>
<sequence>MFTKSVFIALVAGVLGVTAAYDPAHMPAKTDAKGGQTGYNDCQQRYGATNPKAKCQNIFINSVKDFCLWGPPKTNGADTVGDLEAVMVSYCMKSGYGTRLIPDGTIHGAHFLKTPSFVQITGTGDFTKIHIQAGDEGGELDPHGATGSGNPVGGQVFTRAYTGNWEQLPEWQNFMSATEYCFRACRSGPWDRQWCPHIYDVMGCLWNEPANYDRGVFEQCDGTEGEWPGVYSGSTWYQGVKPTPAAQPAGKSSNCRYYPSISNGPAIKTPSKRSVMATHVKRSPEWEEEP</sequence>
<accession>A0A0D1E4Y8</accession>
<comment type="function">
    <text evidence="3">Plays a role in the formation of the appressorium, a specialized infection structure with the purpose of penetrating the host surface, and is required for proper remodeling of the appressorium wall and vesicle secretion.</text>
</comment>
<comment type="subcellular location">
    <subcellularLocation>
        <location evidence="3">Secreted</location>
    </subcellularLocation>
    <subcellularLocation>
        <location evidence="3">Nucleus</location>
    </subcellularLocation>
</comment>
<comment type="disruption phenotype">
    <text evidence="3">Results in a thickened cell wall with altered chitin composition and leads to secretory defects (PubMed:38742361). Decreases virulence on maize; double knockout of ROW1 exacerbates the effect (PubMed:38742361).</text>
</comment>
<gene>
    <name evidence="4" type="primary">ROW2</name>
    <name evidence="6" type="ORF">UMAG_00961</name>
</gene>
<dbReference type="EMBL" id="CM003141">
    <property type="protein sequence ID" value="KIS71044.1"/>
    <property type="molecule type" value="Genomic_DNA"/>
</dbReference>
<dbReference type="RefSeq" id="XP_011386955.1">
    <property type="nucleotide sequence ID" value="XM_011388653.1"/>
</dbReference>
<dbReference type="STRING" id="237631.A0A0D1E4Y8"/>
<dbReference type="EnsemblFungi" id="KIS71044">
    <property type="protein sequence ID" value="KIS71044"/>
    <property type="gene ID" value="UMAG_00961"/>
</dbReference>
<dbReference type="GeneID" id="23562111"/>
<dbReference type="KEGG" id="uma:UMAG_00961"/>
<dbReference type="VEuPathDB" id="FungiDB:UMAG_00961"/>
<dbReference type="eggNOG" id="ENOG502RYV0">
    <property type="taxonomic scope" value="Eukaryota"/>
</dbReference>
<dbReference type="InParanoid" id="A0A0D1E4Y8"/>
<dbReference type="OMA" id="MCQNVYV"/>
<dbReference type="OrthoDB" id="1409999at2759"/>
<dbReference type="Proteomes" id="UP000000561">
    <property type="component" value="Chromosome 2"/>
</dbReference>
<dbReference type="GO" id="GO:0005576">
    <property type="term" value="C:extracellular region"/>
    <property type="evidence" value="ECO:0000314"/>
    <property type="project" value="UniProtKB"/>
</dbReference>
<dbReference type="GO" id="GO:0005634">
    <property type="term" value="C:nucleus"/>
    <property type="evidence" value="ECO:0007669"/>
    <property type="project" value="UniProtKB-SubCell"/>
</dbReference>
<dbReference type="GO" id="GO:0075016">
    <property type="term" value="P:appressorium formation"/>
    <property type="evidence" value="ECO:0000315"/>
    <property type="project" value="UniProtKB"/>
</dbReference>
<feature type="signal peptide" evidence="1">
    <location>
        <begin position="1"/>
        <end position="19"/>
    </location>
</feature>
<feature type="chain" id="PRO_5002245197" description="Appressorium protein ROW2" evidence="1">
    <location>
        <begin position="20"/>
        <end position="290"/>
    </location>
</feature>
<feature type="region of interest" description="Disordered" evidence="2">
    <location>
        <begin position="266"/>
        <end position="290"/>
    </location>
</feature>
<protein>
    <recommendedName>
        <fullName>Appressorium protein ROW2</fullName>
    </recommendedName>
    <alternativeName>
        <fullName evidence="4">Remodeling of fungal cell wall 2</fullName>
    </alternativeName>
</protein>
<keyword id="KW-0539">Nucleus</keyword>
<keyword id="KW-1185">Reference proteome</keyword>
<keyword id="KW-0964">Secreted</keyword>
<keyword id="KW-0732">Signal</keyword>
<keyword id="KW-0843">Virulence</keyword>
<name>ROW2_MYCMD</name>
<organism>
    <name type="scientific">Mycosarcoma maydis</name>
    <name type="common">Corn smut fungus</name>
    <name type="synonym">Ustilago maydis</name>
    <dbReference type="NCBI Taxonomy" id="5270"/>
    <lineage>
        <taxon>Eukaryota</taxon>
        <taxon>Fungi</taxon>
        <taxon>Dikarya</taxon>
        <taxon>Basidiomycota</taxon>
        <taxon>Ustilaginomycotina</taxon>
        <taxon>Ustilaginomycetes</taxon>
        <taxon>Ustilaginales</taxon>
        <taxon>Ustilaginaceae</taxon>
        <taxon>Mycosarcoma</taxon>
    </lineage>
</organism>
<evidence type="ECO:0000255" key="1"/>
<evidence type="ECO:0000256" key="2">
    <source>
        <dbReference type="SAM" id="MobiDB-lite"/>
    </source>
</evidence>
<evidence type="ECO:0000269" key="3">
    <source>
    </source>
</evidence>
<evidence type="ECO:0000303" key="4">
    <source>
    </source>
</evidence>
<evidence type="ECO:0000305" key="5"/>
<evidence type="ECO:0000312" key="6">
    <source>
        <dbReference type="EMBL" id="KIS71044.1"/>
    </source>
</evidence>
<evidence type="ECO:0000312" key="7">
    <source>
        <dbReference type="Proteomes" id="UP000000561"/>
    </source>
</evidence>
<reference evidence="7" key="1">
    <citation type="journal article" date="2006" name="Nature">
        <title>Insights from the genome of the biotrophic fungal plant pathogen Ustilago maydis.</title>
        <authorList>
            <person name="Kaemper J."/>
            <person name="Kahmann R."/>
            <person name="Boelker M."/>
            <person name="Ma L.-J."/>
            <person name="Brefort T."/>
            <person name="Saville B.J."/>
            <person name="Banuett F."/>
            <person name="Kronstad J.W."/>
            <person name="Gold S.E."/>
            <person name="Mueller O."/>
            <person name="Perlin M.H."/>
            <person name="Woesten H.A.B."/>
            <person name="de Vries R."/>
            <person name="Ruiz-Herrera J."/>
            <person name="Reynaga-Pena C.G."/>
            <person name="Snetselaar K."/>
            <person name="McCann M."/>
            <person name="Perez-Martin J."/>
            <person name="Feldbruegge M."/>
            <person name="Basse C.W."/>
            <person name="Steinberg G."/>
            <person name="Ibeas J.I."/>
            <person name="Holloman W."/>
            <person name="Guzman P."/>
            <person name="Farman M.L."/>
            <person name="Stajich J.E."/>
            <person name="Sentandreu R."/>
            <person name="Gonzalez-Prieto J.M."/>
            <person name="Kennell J.C."/>
            <person name="Molina L."/>
            <person name="Schirawski J."/>
            <person name="Mendoza-Mendoza A."/>
            <person name="Greilinger D."/>
            <person name="Muench K."/>
            <person name="Roessel N."/>
            <person name="Scherer M."/>
            <person name="Vranes M."/>
            <person name="Ladendorf O."/>
            <person name="Vincon V."/>
            <person name="Fuchs U."/>
            <person name="Sandrock B."/>
            <person name="Meng S."/>
            <person name="Ho E.C.H."/>
            <person name="Cahill M.J."/>
            <person name="Boyce K.J."/>
            <person name="Klose J."/>
            <person name="Klosterman S.J."/>
            <person name="Deelstra H.J."/>
            <person name="Ortiz-Castellanos L."/>
            <person name="Li W."/>
            <person name="Sanchez-Alonso P."/>
            <person name="Schreier P.H."/>
            <person name="Haeuser-Hahn I."/>
            <person name="Vaupel M."/>
            <person name="Koopmann E."/>
            <person name="Friedrich G."/>
            <person name="Voss H."/>
            <person name="Schlueter T."/>
            <person name="Margolis J."/>
            <person name="Platt D."/>
            <person name="Swimmer C."/>
            <person name="Gnirke A."/>
            <person name="Chen F."/>
            <person name="Vysotskaia V."/>
            <person name="Mannhaupt G."/>
            <person name="Gueldener U."/>
            <person name="Muensterkoetter M."/>
            <person name="Haase D."/>
            <person name="Oesterheld M."/>
            <person name="Mewes H.-W."/>
            <person name="Mauceli E.W."/>
            <person name="DeCaprio D."/>
            <person name="Wade C.M."/>
            <person name="Butler J."/>
            <person name="Young S.K."/>
            <person name="Jaffe D.B."/>
            <person name="Calvo S.E."/>
            <person name="Nusbaum C."/>
            <person name="Galagan J.E."/>
            <person name="Birren B.W."/>
        </authorList>
    </citation>
    <scope>NUCLEOTIDE SEQUENCE [LARGE SCALE GENOMIC DNA]</scope>
    <source>
        <strain>DSM 14603 / FGSC 9021 / UM521</strain>
    </source>
</reference>
<reference evidence="7" key="2">
    <citation type="submission" date="2014-09" db="EMBL/GenBank/DDBJ databases">
        <authorList>
            <person name="Gueldener U."/>
            <person name="Muensterkoetter M."/>
            <person name="Walter M.C."/>
            <person name="Mannhaupt G."/>
            <person name="Kahmann R."/>
        </authorList>
    </citation>
    <scope>GENOME REANNOTATION</scope>
    <source>
        <strain evidence="7">DSM 14603 / FGSC 9021 / UM521</strain>
    </source>
</reference>
<reference evidence="5" key="3">
    <citation type="journal article" date="2024" name="New Phytol.">
        <title>Row1, a member of a new family of conserved fungal proteins involved in infection, is required for appressoria functionality in Ustilago maydis.</title>
        <authorList>
            <person name="Pejenaute-Ochoa M.D."/>
            <person name="Tomas-Gallardo L."/>
            <person name="Ibeas J.I."/>
            <person name="Barrales R.R."/>
        </authorList>
    </citation>
    <scope>FUNCTION</scope>
    <scope>SUBCELLULAR LOCATION</scope>
    <scope>DISRUPTION PHENOTYPE</scope>
</reference>